<dbReference type="EC" id="2.3.1.180" evidence="1"/>
<dbReference type="EMBL" id="CP000828">
    <property type="protein sequence ID" value="ABW25701.1"/>
    <property type="molecule type" value="Genomic_DNA"/>
</dbReference>
<dbReference type="RefSeq" id="WP_012161296.1">
    <property type="nucleotide sequence ID" value="NC_009925.1"/>
</dbReference>
<dbReference type="SMR" id="B0CE67"/>
<dbReference type="STRING" id="329726.AM1_0653"/>
<dbReference type="KEGG" id="amr:AM1_0653"/>
<dbReference type="eggNOG" id="COG0332">
    <property type="taxonomic scope" value="Bacteria"/>
</dbReference>
<dbReference type="HOGENOM" id="CLU_039592_0_1_3"/>
<dbReference type="OrthoDB" id="9815506at2"/>
<dbReference type="UniPathway" id="UPA00094"/>
<dbReference type="Proteomes" id="UP000000268">
    <property type="component" value="Chromosome"/>
</dbReference>
<dbReference type="GO" id="GO:0005737">
    <property type="term" value="C:cytoplasm"/>
    <property type="evidence" value="ECO:0007669"/>
    <property type="project" value="UniProtKB-SubCell"/>
</dbReference>
<dbReference type="GO" id="GO:0004315">
    <property type="term" value="F:3-oxoacyl-[acyl-carrier-protein] synthase activity"/>
    <property type="evidence" value="ECO:0007669"/>
    <property type="project" value="InterPro"/>
</dbReference>
<dbReference type="GO" id="GO:0033818">
    <property type="term" value="F:beta-ketoacyl-acyl-carrier-protein synthase III activity"/>
    <property type="evidence" value="ECO:0007669"/>
    <property type="project" value="UniProtKB-UniRule"/>
</dbReference>
<dbReference type="GO" id="GO:0006633">
    <property type="term" value="P:fatty acid biosynthetic process"/>
    <property type="evidence" value="ECO:0007669"/>
    <property type="project" value="UniProtKB-UniRule"/>
</dbReference>
<dbReference type="CDD" id="cd00830">
    <property type="entry name" value="KAS_III"/>
    <property type="match status" value="1"/>
</dbReference>
<dbReference type="FunFam" id="3.40.47.10:FF:000004">
    <property type="entry name" value="3-oxoacyl-[acyl-carrier-protein] synthase 3"/>
    <property type="match status" value="1"/>
</dbReference>
<dbReference type="Gene3D" id="3.40.47.10">
    <property type="match status" value="1"/>
</dbReference>
<dbReference type="HAMAP" id="MF_01815">
    <property type="entry name" value="FabH"/>
    <property type="match status" value="1"/>
</dbReference>
<dbReference type="InterPro" id="IPR013747">
    <property type="entry name" value="ACP_syn_III_C"/>
</dbReference>
<dbReference type="InterPro" id="IPR013751">
    <property type="entry name" value="ACP_syn_III_N"/>
</dbReference>
<dbReference type="InterPro" id="IPR004655">
    <property type="entry name" value="FabH"/>
</dbReference>
<dbReference type="InterPro" id="IPR016039">
    <property type="entry name" value="Thiolase-like"/>
</dbReference>
<dbReference type="NCBIfam" id="TIGR00747">
    <property type="entry name" value="fabH"/>
    <property type="match status" value="1"/>
</dbReference>
<dbReference type="NCBIfam" id="NF006829">
    <property type="entry name" value="PRK09352.1"/>
    <property type="match status" value="1"/>
</dbReference>
<dbReference type="PANTHER" id="PTHR43091">
    <property type="entry name" value="3-OXOACYL-[ACYL-CARRIER-PROTEIN] SYNTHASE"/>
    <property type="match status" value="1"/>
</dbReference>
<dbReference type="PANTHER" id="PTHR43091:SF1">
    <property type="entry name" value="BETA-KETOACYL-[ACYL-CARRIER-PROTEIN] SYNTHASE III, CHLOROPLASTIC"/>
    <property type="match status" value="1"/>
</dbReference>
<dbReference type="Pfam" id="PF08545">
    <property type="entry name" value="ACP_syn_III"/>
    <property type="match status" value="1"/>
</dbReference>
<dbReference type="Pfam" id="PF08541">
    <property type="entry name" value="ACP_syn_III_C"/>
    <property type="match status" value="1"/>
</dbReference>
<dbReference type="SUPFAM" id="SSF53901">
    <property type="entry name" value="Thiolase-like"/>
    <property type="match status" value="1"/>
</dbReference>
<protein>
    <recommendedName>
        <fullName evidence="1">Beta-ketoacyl-[acyl-carrier-protein] synthase III</fullName>
        <shortName evidence="1">Beta-ketoacyl-ACP synthase III</shortName>
        <shortName evidence="1">KAS III</shortName>
        <ecNumber evidence="1">2.3.1.180</ecNumber>
    </recommendedName>
    <alternativeName>
        <fullName evidence="1">3-oxoacyl-[acyl-carrier-protein] synthase 3</fullName>
    </alternativeName>
    <alternativeName>
        <fullName evidence="1">3-oxoacyl-[acyl-carrier-protein] synthase III</fullName>
    </alternativeName>
</protein>
<comment type="function">
    <text evidence="1">Catalyzes the condensation reaction of fatty acid synthesis by the addition to an acyl acceptor of two carbons from malonyl-ACP. Catalyzes the first condensation reaction which initiates fatty acid synthesis and may therefore play a role in governing the total rate of fatty acid production. Possesses both acetoacetyl-ACP synthase and acetyl transacylase activities. Its substrate specificity determines the biosynthesis of branched-chain and/or straight-chain of fatty acids.</text>
</comment>
<comment type="catalytic activity">
    <reaction evidence="1">
        <text>malonyl-[ACP] + acetyl-CoA + H(+) = 3-oxobutanoyl-[ACP] + CO2 + CoA</text>
        <dbReference type="Rhea" id="RHEA:12080"/>
        <dbReference type="Rhea" id="RHEA-COMP:9623"/>
        <dbReference type="Rhea" id="RHEA-COMP:9625"/>
        <dbReference type="ChEBI" id="CHEBI:15378"/>
        <dbReference type="ChEBI" id="CHEBI:16526"/>
        <dbReference type="ChEBI" id="CHEBI:57287"/>
        <dbReference type="ChEBI" id="CHEBI:57288"/>
        <dbReference type="ChEBI" id="CHEBI:78449"/>
        <dbReference type="ChEBI" id="CHEBI:78450"/>
        <dbReference type="EC" id="2.3.1.180"/>
    </reaction>
</comment>
<comment type="pathway">
    <text evidence="1">Lipid metabolism; fatty acid biosynthesis.</text>
</comment>
<comment type="subunit">
    <text evidence="1">Homodimer.</text>
</comment>
<comment type="subcellular location">
    <subcellularLocation>
        <location evidence="1">Cytoplasm</location>
    </subcellularLocation>
</comment>
<comment type="domain">
    <text evidence="1">The last Arg residue of the ACP-binding site is essential for the weak association between ACP/AcpP and FabH.</text>
</comment>
<comment type="similarity">
    <text evidence="1">Belongs to the thiolase-like superfamily. FabH family.</text>
</comment>
<proteinExistence type="inferred from homology"/>
<reference key="1">
    <citation type="journal article" date="2008" name="Proc. Natl. Acad. Sci. U.S.A.">
        <title>Niche adaptation and genome expansion in the chlorophyll d-producing cyanobacterium Acaryochloris marina.</title>
        <authorList>
            <person name="Swingley W.D."/>
            <person name="Chen M."/>
            <person name="Cheung P.C."/>
            <person name="Conrad A.L."/>
            <person name="Dejesa L.C."/>
            <person name="Hao J."/>
            <person name="Honchak B.M."/>
            <person name="Karbach L.E."/>
            <person name="Kurdoglu A."/>
            <person name="Lahiri S."/>
            <person name="Mastrian S.D."/>
            <person name="Miyashita H."/>
            <person name="Page L."/>
            <person name="Ramakrishna P."/>
            <person name="Satoh S."/>
            <person name="Sattley W.M."/>
            <person name="Shimada Y."/>
            <person name="Taylor H.L."/>
            <person name="Tomo T."/>
            <person name="Tsuchiya T."/>
            <person name="Wang Z.T."/>
            <person name="Raymond J."/>
            <person name="Mimuro M."/>
            <person name="Blankenship R.E."/>
            <person name="Touchman J.W."/>
        </authorList>
    </citation>
    <scope>NUCLEOTIDE SEQUENCE [LARGE SCALE GENOMIC DNA]</scope>
    <source>
        <strain>MBIC 11017</strain>
    </source>
</reference>
<organism>
    <name type="scientific">Acaryochloris marina (strain MBIC 11017)</name>
    <dbReference type="NCBI Taxonomy" id="329726"/>
    <lineage>
        <taxon>Bacteria</taxon>
        <taxon>Bacillati</taxon>
        <taxon>Cyanobacteriota</taxon>
        <taxon>Cyanophyceae</taxon>
        <taxon>Acaryochloridales</taxon>
        <taxon>Acaryochloridaceae</taxon>
        <taxon>Acaryochloris</taxon>
    </lineage>
</organism>
<keyword id="KW-0012">Acyltransferase</keyword>
<keyword id="KW-0963">Cytoplasm</keyword>
<keyword id="KW-0275">Fatty acid biosynthesis</keyword>
<keyword id="KW-0276">Fatty acid metabolism</keyword>
<keyword id="KW-0444">Lipid biosynthesis</keyword>
<keyword id="KW-0443">Lipid metabolism</keyword>
<keyword id="KW-0511">Multifunctional enzyme</keyword>
<keyword id="KW-1185">Reference proteome</keyword>
<keyword id="KW-0808">Transferase</keyword>
<feature type="chain" id="PRO_1000088303" description="Beta-ketoacyl-[acyl-carrier-protein] synthase III">
    <location>
        <begin position="1"/>
        <end position="332"/>
    </location>
</feature>
<feature type="region of interest" description="ACP-binding" evidence="1">
    <location>
        <begin position="258"/>
        <end position="262"/>
    </location>
</feature>
<feature type="active site" evidence="1">
    <location>
        <position position="116"/>
    </location>
</feature>
<feature type="active site" evidence="1">
    <location>
        <position position="257"/>
    </location>
</feature>
<feature type="active site" evidence="1">
    <location>
        <position position="287"/>
    </location>
</feature>
<name>FABH_ACAM1</name>
<gene>
    <name evidence="1" type="primary">fabH</name>
    <name type="ordered locus">AM1_0653</name>
</gene>
<accession>B0CE67</accession>
<sequence>MQQMATGLAVTGCGSAAPETSLDNHGLSQIVDTSDEWIASRTGIRSRHLAGPDDTLAKLGAIAAQNALEMAQVEATDLDLILLATSTPDDLFGSACQIQAAIGAKHAVAFDLTAACSGFVFGMITAAQFIRTGVYRNVLLVGADVLSRWVDWTDRRSCVLFGDGAGAVVLQANDTDRLLGFALHSDGCLHDCLNVQYQGEARPLTGEINVSQGTYQPISMNGKEVYRFAVNRVPEVVEKALFQSDLKTDDIDWLLLHQANQRILDAVAKRLKVPAEKVISNIANYGNTSAATIPLALDATVRKGHIKPGDTIAASGFGAGLSWGAAIFQWQR</sequence>
<evidence type="ECO:0000255" key="1">
    <source>
        <dbReference type="HAMAP-Rule" id="MF_01815"/>
    </source>
</evidence>